<reference key="1">
    <citation type="submission" date="2008-02" db="EMBL/GenBank/DDBJ databases">
        <title>Complete sequence of Yersinia pseudotuberculosis YPIII.</title>
        <authorList>
            <consortium name="US DOE Joint Genome Institute"/>
            <person name="Copeland A."/>
            <person name="Lucas S."/>
            <person name="Lapidus A."/>
            <person name="Glavina del Rio T."/>
            <person name="Dalin E."/>
            <person name="Tice H."/>
            <person name="Bruce D."/>
            <person name="Goodwin L."/>
            <person name="Pitluck S."/>
            <person name="Munk A.C."/>
            <person name="Brettin T."/>
            <person name="Detter J.C."/>
            <person name="Han C."/>
            <person name="Tapia R."/>
            <person name="Schmutz J."/>
            <person name="Larimer F."/>
            <person name="Land M."/>
            <person name="Hauser L."/>
            <person name="Challacombe J.F."/>
            <person name="Green L."/>
            <person name="Lindler L.E."/>
            <person name="Nikolich M.P."/>
            <person name="Richardson P."/>
        </authorList>
    </citation>
    <scope>NUCLEOTIDE SEQUENCE [LARGE SCALE GENOMIC DNA]</scope>
    <source>
        <strain>YPIII</strain>
    </source>
</reference>
<organism>
    <name type="scientific">Yersinia pseudotuberculosis serotype O:3 (strain YPIII)</name>
    <dbReference type="NCBI Taxonomy" id="502800"/>
    <lineage>
        <taxon>Bacteria</taxon>
        <taxon>Pseudomonadati</taxon>
        <taxon>Pseudomonadota</taxon>
        <taxon>Gammaproteobacteria</taxon>
        <taxon>Enterobacterales</taxon>
        <taxon>Yersiniaceae</taxon>
        <taxon>Yersinia</taxon>
    </lineage>
</organism>
<feature type="chain" id="PRO_1000122106" description="Exodeoxyribonuclease 7 large subunit">
    <location>
        <begin position="1"/>
        <end position="459"/>
    </location>
</feature>
<proteinExistence type="inferred from homology"/>
<comment type="function">
    <text evidence="1">Bidirectionally degrades single-stranded DNA into large acid-insoluble oligonucleotides, which are then degraded further into small acid-soluble oligonucleotides.</text>
</comment>
<comment type="catalytic activity">
    <reaction evidence="1">
        <text>Exonucleolytic cleavage in either 5'- to 3'- or 3'- to 5'-direction to yield nucleoside 5'-phosphates.</text>
        <dbReference type="EC" id="3.1.11.6"/>
    </reaction>
</comment>
<comment type="subunit">
    <text evidence="1">Heterooligomer composed of large and small subunits.</text>
</comment>
<comment type="subcellular location">
    <subcellularLocation>
        <location evidence="1">Cytoplasm</location>
    </subcellularLocation>
</comment>
<comment type="similarity">
    <text evidence="1">Belongs to the XseA family.</text>
</comment>
<keyword id="KW-0963">Cytoplasm</keyword>
<keyword id="KW-0269">Exonuclease</keyword>
<keyword id="KW-0378">Hydrolase</keyword>
<keyword id="KW-0540">Nuclease</keyword>
<gene>
    <name evidence="1" type="primary">xseA</name>
    <name type="ordered locus">YPK_1301</name>
</gene>
<protein>
    <recommendedName>
        <fullName evidence="1">Exodeoxyribonuclease 7 large subunit</fullName>
        <ecNumber evidence="1">3.1.11.6</ecNumber>
    </recommendedName>
    <alternativeName>
        <fullName evidence="1">Exodeoxyribonuclease VII large subunit</fullName>
        <shortName evidence="1">Exonuclease VII large subunit</shortName>
    </alternativeName>
</protein>
<accession>B1JSA8</accession>
<name>EX7L_YERPY</name>
<sequence length="459" mass="52035">MSQSSASSIFTVSRLNQTVRELLEREMGQIWLTAEISNFSQPASGHWYFTLKDDRAQVRCAMFRNSNRRTTFRPQNGQQVLVRASITLYEPRGDYQLIAESMQPAGDGLLQQQFEQLKQQLAAEGLFDQSHKQPLPSPAKQVGVITSASGAALHDVLHVLQRRDPSLPVIIYPTSVQGVDAPLQIVRAIQLANLRAECDVLIVGRGGGSLEDLWSFNDERVARAIFNSHIPIVSAVGHETDVTIADFVADLRAPTPSAAAELVSRNQIELVRQIQGQQQRMEMAMDYYLAQRTQQFTRLEHRLQQQHPHLRLARQQTLLLKLQRRLEESAQTQIRLLSKRTERLQQRLQQVQPQGQIHRYNQRVQQQEYRLRQAVERQLNGYRQRFGIACSQLEAVSPLATLARGYSVTQTPAGALLKTTKQVQAGDKLTTRLQDGWVESEITQVTVAKKSRQKKVVTQ</sequence>
<dbReference type="EC" id="3.1.11.6" evidence="1"/>
<dbReference type="EMBL" id="CP000950">
    <property type="protein sequence ID" value="ACA67599.1"/>
    <property type="molecule type" value="Genomic_DNA"/>
</dbReference>
<dbReference type="RefSeq" id="WP_012303852.1">
    <property type="nucleotide sequence ID" value="NZ_CP009792.1"/>
</dbReference>
<dbReference type="SMR" id="B1JSA8"/>
<dbReference type="KEGG" id="ypy:YPK_1301"/>
<dbReference type="GO" id="GO:0005737">
    <property type="term" value="C:cytoplasm"/>
    <property type="evidence" value="ECO:0007669"/>
    <property type="project" value="UniProtKB-SubCell"/>
</dbReference>
<dbReference type="GO" id="GO:0009318">
    <property type="term" value="C:exodeoxyribonuclease VII complex"/>
    <property type="evidence" value="ECO:0007669"/>
    <property type="project" value="InterPro"/>
</dbReference>
<dbReference type="GO" id="GO:0008855">
    <property type="term" value="F:exodeoxyribonuclease VII activity"/>
    <property type="evidence" value="ECO:0007669"/>
    <property type="project" value="UniProtKB-UniRule"/>
</dbReference>
<dbReference type="GO" id="GO:0003676">
    <property type="term" value="F:nucleic acid binding"/>
    <property type="evidence" value="ECO:0007669"/>
    <property type="project" value="InterPro"/>
</dbReference>
<dbReference type="GO" id="GO:0006308">
    <property type="term" value="P:DNA catabolic process"/>
    <property type="evidence" value="ECO:0007669"/>
    <property type="project" value="UniProtKB-UniRule"/>
</dbReference>
<dbReference type="CDD" id="cd04489">
    <property type="entry name" value="ExoVII_LU_OBF"/>
    <property type="match status" value="1"/>
</dbReference>
<dbReference type="HAMAP" id="MF_00378">
    <property type="entry name" value="Exonuc_7_L"/>
    <property type="match status" value="1"/>
</dbReference>
<dbReference type="InterPro" id="IPR003753">
    <property type="entry name" value="Exonuc_VII_L"/>
</dbReference>
<dbReference type="InterPro" id="IPR020579">
    <property type="entry name" value="Exonuc_VII_lsu_C"/>
</dbReference>
<dbReference type="InterPro" id="IPR025824">
    <property type="entry name" value="OB-fold_nuc-bd_dom"/>
</dbReference>
<dbReference type="NCBIfam" id="TIGR00237">
    <property type="entry name" value="xseA"/>
    <property type="match status" value="1"/>
</dbReference>
<dbReference type="PANTHER" id="PTHR30008">
    <property type="entry name" value="EXODEOXYRIBONUCLEASE 7 LARGE SUBUNIT"/>
    <property type="match status" value="1"/>
</dbReference>
<dbReference type="PANTHER" id="PTHR30008:SF0">
    <property type="entry name" value="EXODEOXYRIBONUCLEASE 7 LARGE SUBUNIT"/>
    <property type="match status" value="1"/>
</dbReference>
<dbReference type="Pfam" id="PF02601">
    <property type="entry name" value="Exonuc_VII_L"/>
    <property type="match status" value="1"/>
</dbReference>
<dbReference type="Pfam" id="PF13742">
    <property type="entry name" value="tRNA_anti_2"/>
    <property type="match status" value="1"/>
</dbReference>
<evidence type="ECO:0000255" key="1">
    <source>
        <dbReference type="HAMAP-Rule" id="MF_00378"/>
    </source>
</evidence>